<gene>
    <name evidence="1" type="primary">nagB</name>
    <name type="ordered locus">SSA_0746</name>
</gene>
<name>NAGB_STRSV</name>
<accession>A3CLX4</accession>
<evidence type="ECO:0000255" key="1">
    <source>
        <dbReference type="HAMAP-Rule" id="MF_01241"/>
    </source>
</evidence>
<keyword id="KW-0119">Carbohydrate metabolism</keyword>
<keyword id="KW-0378">Hydrolase</keyword>
<keyword id="KW-1185">Reference proteome</keyword>
<sequence length="235" mass="25668">MKIIQVENQVEGGKVALELLKEKLAQGAKTLGLATGSSPEEFYKQIVESDLDFSEMTSVNLDEYVGLQEEDPQSYRYFMNQHLFNQKPFKASFLPNGAAKDLEAEVARYNQLLTEHPADLQILGIGTNGHIGFNEPGTSFDSQTHLVDLTPSTIQSNARFFDKMEDVPTQAISMGIGNILNAKSIILFAYGSAKAKAIAGTVEGEVTEELPGSALQKHPDVVIIADKEALSLLKH</sequence>
<reference key="1">
    <citation type="journal article" date="2007" name="J. Bacteriol.">
        <title>Genome of the opportunistic pathogen Streptococcus sanguinis.</title>
        <authorList>
            <person name="Xu P."/>
            <person name="Alves J.M."/>
            <person name="Kitten T."/>
            <person name="Brown A."/>
            <person name="Chen Z."/>
            <person name="Ozaki L.S."/>
            <person name="Manque P."/>
            <person name="Ge X."/>
            <person name="Serrano M.G."/>
            <person name="Puiu D."/>
            <person name="Hendricks S."/>
            <person name="Wang Y."/>
            <person name="Chaplin M.D."/>
            <person name="Akan D."/>
            <person name="Paik S."/>
            <person name="Peterson D.L."/>
            <person name="Macrina F.L."/>
            <person name="Buck G.A."/>
        </authorList>
    </citation>
    <scope>NUCLEOTIDE SEQUENCE [LARGE SCALE GENOMIC DNA]</scope>
    <source>
        <strain>SK36</strain>
    </source>
</reference>
<organism>
    <name type="scientific">Streptococcus sanguinis (strain SK36)</name>
    <dbReference type="NCBI Taxonomy" id="388919"/>
    <lineage>
        <taxon>Bacteria</taxon>
        <taxon>Bacillati</taxon>
        <taxon>Bacillota</taxon>
        <taxon>Bacilli</taxon>
        <taxon>Lactobacillales</taxon>
        <taxon>Streptococcaceae</taxon>
        <taxon>Streptococcus</taxon>
    </lineage>
</organism>
<comment type="function">
    <text evidence="1">Catalyzes the reversible isomerization-deamination of glucosamine 6-phosphate (GlcN6P) to form fructose 6-phosphate (Fru6P) and ammonium ion.</text>
</comment>
<comment type="catalytic activity">
    <reaction evidence="1">
        <text>alpha-D-glucosamine 6-phosphate + H2O = beta-D-fructose 6-phosphate + NH4(+)</text>
        <dbReference type="Rhea" id="RHEA:12172"/>
        <dbReference type="ChEBI" id="CHEBI:15377"/>
        <dbReference type="ChEBI" id="CHEBI:28938"/>
        <dbReference type="ChEBI" id="CHEBI:57634"/>
        <dbReference type="ChEBI" id="CHEBI:75989"/>
        <dbReference type="EC" id="3.5.99.6"/>
    </reaction>
</comment>
<comment type="pathway">
    <text evidence="1">Amino-sugar metabolism; N-acetylneuraminate degradation; D-fructose 6-phosphate from N-acetylneuraminate: step 5/5.</text>
</comment>
<comment type="similarity">
    <text evidence="1">Belongs to the glucosamine/galactosamine-6-phosphate isomerase family. NagB subfamily.</text>
</comment>
<feature type="chain" id="PRO_1000067030" description="Glucosamine-6-phosphate deaminase">
    <location>
        <begin position="1"/>
        <end position="235"/>
    </location>
</feature>
<feature type="active site" description="Proton acceptor; for enolization step" evidence="1">
    <location>
        <position position="62"/>
    </location>
</feature>
<feature type="active site" description="For ring-opening step" evidence="1">
    <location>
        <position position="128"/>
    </location>
</feature>
<feature type="active site" description="Proton acceptor; for ring-opening step" evidence="1">
    <location>
        <position position="130"/>
    </location>
</feature>
<feature type="active site" description="For ring-opening step" evidence="1">
    <location>
        <position position="135"/>
    </location>
</feature>
<proteinExistence type="inferred from homology"/>
<protein>
    <recommendedName>
        <fullName evidence="1">Glucosamine-6-phosphate deaminase</fullName>
        <ecNumber evidence="1">3.5.99.6</ecNumber>
    </recommendedName>
    <alternativeName>
        <fullName evidence="1">GlcN6P deaminase</fullName>
        <shortName evidence="1">GNPDA</shortName>
    </alternativeName>
    <alternativeName>
        <fullName evidence="1">Glucosamine-6-phosphate isomerase</fullName>
    </alternativeName>
</protein>
<dbReference type="EC" id="3.5.99.6" evidence="1"/>
<dbReference type="EMBL" id="CP000387">
    <property type="protein sequence ID" value="ABN44179.1"/>
    <property type="molecule type" value="Genomic_DNA"/>
</dbReference>
<dbReference type="RefSeq" id="WP_011836695.1">
    <property type="nucleotide sequence ID" value="NC_009009.1"/>
</dbReference>
<dbReference type="RefSeq" id="YP_001034729.1">
    <property type="nucleotide sequence ID" value="NC_009009.1"/>
</dbReference>
<dbReference type="SMR" id="A3CLX4"/>
<dbReference type="STRING" id="388919.SSA_0746"/>
<dbReference type="KEGG" id="ssa:SSA_0746"/>
<dbReference type="PATRIC" id="fig|388919.9.peg.715"/>
<dbReference type="eggNOG" id="COG0363">
    <property type="taxonomic scope" value="Bacteria"/>
</dbReference>
<dbReference type="HOGENOM" id="CLU_049611_1_0_9"/>
<dbReference type="OrthoDB" id="9791139at2"/>
<dbReference type="BioCyc" id="MetaCyc:MONOMER-13104"/>
<dbReference type="UniPathway" id="UPA00629">
    <property type="reaction ID" value="UER00684"/>
</dbReference>
<dbReference type="Proteomes" id="UP000002148">
    <property type="component" value="Chromosome"/>
</dbReference>
<dbReference type="GO" id="GO:0005737">
    <property type="term" value="C:cytoplasm"/>
    <property type="evidence" value="ECO:0007669"/>
    <property type="project" value="TreeGrafter"/>
</dbReference>
<dbReference type="GO" id="GO:0004342">
    <property type="term" value="F:glucosamine-6-phosphate deaminase activity"/>
    <property type="evidence" value="ECO:0007669"/>
    <property type="project" value="UniProtKB-UniRule"/>
</dbReference>
<dbReference type="GO" id="GO:0042802">
    <property type="term" value="F:identical protein binding"/>
    <property type="evidence" value="ECO:0007669"/>
    <property type="project" value="TreeGrafter"/>
</dbReference>
<dbReference type="GO" id="GO:0005975">
    <property type="term" value="P:carbohydrate metabolic process"/>
    <property type="evidence" value="ECO:0007669"/>
    <property type="project" value="InterPro"/>
</dbReference>
<dbReference type="GO" id="GO:0006043">
    <property type="term" value="P:glucosamine catabolic process"/>
    <property type="evidence" value="ECO:0007669"/>
    <property type="project" value="TreeGrafter"/>
</dbReference>
<dbReference type="GO" id="GO:0006046">
    <property type="term" value="P:N-acetylglucosamine catabolic process"/>
    <property type="evidence" value="ECO:0007669"/>
    <property type="project" value="TreeGrafter"/>
</dbReference>
<dbReference type="GO" id="GO:0019262">
    <property type="term" value="P:N-acetylneuraminate catabolic process"/>
    <property type="evidence" value="ECO:0007669"/>
    <property type="project" value="UniProtKB-UniRule"/>
</dbReference>
<dbReference type="CDD" id="cd01399">
    <property type="entry name" value="GlcN6P_deaminase"/>
    <property type="match status" value="1"/>
</dbReference>
<dbReference type="FunFam" id="3.40.50.1360:FF:000003">
    <property type="entry name" value="Glucosamine-6-phosphate deaminase"/>
    <property type="match status" value="1"/>
</dbReference>
<dbReference type="Gene3D" id="3.40.50.1360">
    <property type="match status" value="1"/>
</dbReference>
<dbReference type="HAMAP" id="MF_01241">
    <property type="entry name" value="GlcN6P_deamin"/>
    <property type="match status" value="1"/>
</dbReference>
<dbReference type="InterPro" id="IPR006148">
    <property type="entry name" value="Glc/Gal-6P_isomerase"/>
</dbReference>
<dbReference type="InterPro" id="IPR004547">
    <property type="entry name" value="Glucosamine6P_isomerase"/>
</dbReference>
<dbReference type="InterPro" id="IPR037171">
    <property type="entry name" value="NagB/RpiA_transferase-like"/>
</dbReference>
<dbReference type="NCBIfam" id="TIGR00502">
    <property type="entry name" value="nagB"/>
    <property type="match status" value="1"/>
</dbReference>
<dbReference type="PANTHER" id="PTHR11280">
    <property type="entry name" value="GLUCOSAMINE-6-PHOSPHATE ISOMERASE"/>
    <property type="match status" value="1"/>
</dbReference>
<dbReference type="PANTHER" id="PTHR11280:SF5">
    <property type="entry name" value="GLUCOSAMINE-6-PHOSPHATE ISOMERASE"/>
    <property type="match status" value="1"/>
</dbReference>
<dbReference type="Pfam" id="PF01182">
    <property type="entry name" value="Glucosamine_iso"/>
    <property type="match status" value="1"/>
</dbReference>
<dbReference type="SUPFAM" id="SSF100950">
    <property type="entry name" value="NagB/RpiA/CoA transferase-like"/>
    <property type="match status" value="1"/>
</dbReference>